<keyword id="KW-0007">Acetylation</keyword>
<keyword id="KW-0025">Alternative splicing</keyword>
<keyword id="KW-0067">ATP-binding</keyword>
<keyword id="KW-0090">Biological rhythms</keyword>
<keyword id="KW-0963">Cytoplasm</keyword>
<keyword id="KW-0225">Disease variant</keyword>
<keyword id="KW-0227">DNA damage</keyword>
<keyword id="KW-0234">DNA repair</keyword>
<keyword id="KW-0391">Immunity</keyword>
<keyword id="KW-0399">Innate immunity</keyword>
<keyword id="KW-0418">Kinase</keyword>
<keyword id="KW-0547">Nucleotide-binding</keyword>
<keyword id="KW-0539">Nucleus</keyword>
<keyword id="KW-0597">Phosphoprotein</keyword>
<keyword id="KW-1185">Reference proteome</keyword>
<keyword id="KW-0677">Repeat</keyword>
<keyword id="KW-0690">Ribosome biogenesis</keyword>
<keyword id="KW-0702">S-nitrosylation</keyword>
<keyword id="KW-0705">SCID</keyword>
<keyword id="KW-0723">Serine/threonine-protein kinase</keyword>
<keyword id="KW-0802">TPR repeat</keyword>
<keyword id="KW-0808">Transferase</keyword>
<keyword id="KW-0832">Ubl conjugation</keyword>
<name>PRKDC_MOUSE</name>
<gene>
    <name type="primary">Prkdc</name>
    <name type="synonym">Xrcc7</name>
</gene>
<organism>
    <name type="scientific">Mus musculus</name>
    <name type="common">Mouse</name>
    <dbReference type="NCBI Taxonomy" id="10090"/>
    <lineage>
        <taxon>Eukaryota</taxon>
        <taxon>Metazoa</taxon>
        <taxon>Chordata</taxon>
        <taxon>Craniata</taxon>
        <taxon>Vertebrata</taxon>
        <taxon>Euteleostomi</taxon>
        <taxon>Mammalia</taxon>
        <taxon>Eutheria</taxon>
        <taxon>Euarchontoglires</taxon>
        <taxon>Glires</taxon>
        <taxon>Rodentia</taxon>
        <taxon>Myomorpha</taxon>
        <taxon>Muroidea</taxon>
        <taxon>Muridae</taxon>
        <taxon>Murinae</taxon>
        <taxon>Mus</taxon>
        <taxon>Mus</taxon>
    </lineage>
</organism>
<reference key="1">
    <citation type="journal article" date="1997" name="Proc. Natl. Acad. Sci. U.S.A.">
        <title>Nonsense mutation at Tyr-4046 in the DNA-dependent protein kinase catalytic subunit of severe combined immune deficiency mice.</title>
        <authorList>
            <person name="Araki R."/>
            <person name="Fujimori A."/>
            <person name="Hamatani K."/>
            <person name="Mita K."/>
            <person name="Saito T."/>
            <person name="Mori M."/>
            <person name="Fukumura R."/>
            <person name="Morimyo M."/>
            <person name="Muto M."/>
            <person name="Itoh M."/>
            <person name="Tatsumi K."/>
            <person name="Abe M."/>
        </authorList>
    </citation>
    <scope>NUCLEOTIDE SEQUENCE [MRNA] (ISOFORM 1)</scope>
    <scope>INVOLVEMENT IN SCID</scope>
    <scope>VARIANT CYS-2140</scope>
    <scope>VARIANT SCID 4046-TYR--MET-4128 DEL</scope>
    <source>
        <strain>C.B17</strain>
        <tissue>Fibroblast</tissue>
        <tissue>Leukocyte</tissue>
    </source>
</reference>
<reference key="2">
    <citation type="journal article" date="1998" name="J. Biol. Chem.">
        <title>Murine cell line SX9 bearing a mutation in the DNA-PKcs gene exhibits aberrant V(D)J recombination not only in the coding joint but also in the signal joint.</title>
        <authorList>
            <person name="Fukumura R."/>
            <person name="Araki R."/>
            <person name="Fujimori A."/>
            <person name="Mori M."/>
            <person name="Saito T."/>
            <person name="Watanabe F."/>
            <person name="Sarashi M."/>
            <person name="Itsukaichi H."/>
            <person name="Eguch-Kasai K."/>
            <person name="Sato K."/>
            <person name="Tatsumi K."/>
            <person name="Abe M."/>
        </authorList>
    </citation>
    <scope>NUCLEOTIDE SEQUENCE [MRNA] (ISOFORM 1)</scope>
    <scope>VARIANT CYS-2140</scope>
</reference>
<reference key="3">
    <citation type="journal article" date="1997" name="Genomics">
        <title>The murine DNA-PKcs gene consists of 86 exons dispersed in more than 250 kb.</title>
        <authorList>
            <person name="Fujimori A."/>
            <person name="Araki R."/>
            <person name="Fukumura R."/>
            <person name="Saito T."/>
            <person name="Mori M."/>
            <person name="Mita K."/>
            <person name="Tatsumi K."/>
            <person name="Abe M."/>
        </authorList>
    </citation>
    <scope>NUCLEOTIDE SEQUENCE [GENOMIC DNA]</scope>
    <scope>VARIANT CYS-2140</scope>
    <source>
        <strain>129/SvJ</strain>
    </source>
</reference>
<reference key="4">
    <citation type="journal article" date="2005" name="Science">
        <title>The transcriptional landscape of the mammalian genome.</title>
        <authorList>
            <person name="Carninci P."/>
            <person name="Kasukawa T."/>
            <person name="Katayama S."/>
            <person name="Gough J."/>
            <person name="Frith M.C."/>
            <person name="Maeda N."/>
            <person name="Oyama R."/>
            <person name="Ravasi T."/>
            <person name="Lenhard B."/>
            <person name="Wells C."/>
            <person name="Kodzius R."/>
            <person name="Shimokawa K."/>
            <person name="Bajic V.B."/>
            <person name="Brenner S.E."/>
            <person name="Batalov S."/>
            <person name="Forrest A.R."/>
            <person name="Zavolan M."/>
            <person name="Davis M.J."/>
            <person name="Wilming L.G."/>
            <person name="Aidinis V."/>
            <person name="Allen J.E."/>
            <person name="Ambesi-Impiombato A."/>
            <person name="Apweiler R."/>
            <person name="Aturaliya R.N."/>
            <person name="Bailey T.L."/>
            <person name="Bansal M."/>
            <person name="Baxter L."/>
            <person name="Beisel K.W."/>
            <person name="Bersano T."/>
            <person name="Bono H."/>
            <person name="Chalk A.M."/>
            <person name="Chiu K.P."/>
            <person name="Choudhary V."/>
            <person name="Christoffels A."/>
            <person name="Clutterbuck D.R."/>
            <person name="Crowe M.L."/>
            <person name="Dalla E."/>
            <person name="Dalrymple B.P."/>
            <person name="de Bono B."/>
            <person name="Della Gatta G."/>
            <person name="di Bernardo D."/>
            <person name="Down T."/>
            <person name="Engstrom P."/>
            <person name="Fagiolini M."/>
            <person name="Faulkner G."/>
            <person name="Fletcher C.F."/>
            <person name="Fukushima T."/>
            <person name="Furuno M."/>
            <person name="Futaki S."/>
            <person name="Gariboldi M."/>
            <person name="Georgii-Hemming P."/>
            <person name="Gingeras T.R."/>
            <person name="Gojobori T."/>
            <person name="Green R.E."/>
            <person name="Gustincich S."/>
            <person name="Harbers M."/>
            <person name="Hayashi Y."/>
            <person name="Hensch T.K."/>
            <person name="Hirokawa N."/>
            <person name="Hill D."/>
            <person name="Huminiecki L."/>
            <person name="Iacono M."/>
            <person name="Ikeo K."/>
            <person name="Iwama A."/>
            <person name="Ishikawa T."/>
            <person name="Jakt M."/>
            <person name="Kanapin A."/>
            <person name="Katoh M."/>
            <person name="Kawasawa Y."/>
            <person name="Kelso J."/>
            <person name="Kitamura H."/>
            <person name="Kitano H."/>
            <person name="Kollias G."/>
            <person name="Krishnan S.P."/>
            <person name="Kruger A."/>
            <person name="Kummerfeld S.K."/>
            <person name="Kurochkin I.V."/>
            <person name="Lareau L.F."/>
            <person name="Lazarevic D."/>
            <person name="Lipovich L."/>
            <person name="Liu J."/>
            <person name="Liuni S."/>
            <person name="McWilliam S."/>
            <person name="Madan Babu M."/>
            <person name="Madera M."/>
            <person name="Marchionni L."/>
            <person name="Matsuda H."/>
            <person name="Matsuzawa S."/>
            <person name="Miki H."/>
            <person name="Mignone F."/>
            <person name="Miyake S."/>
            <person name="Morris K."/>
            <person name="Mottagui-Tabar S."/>
            <person name="Mulder N."/>
            <person name="Nakano N."/>
            <person name="Nakauchi H."/>
            <person name="Ng P."/>
            <person name="Nilsson R."/>
            <person name="Nishiguchi S."/>
            <person name="Nishikawa S."/>
            <person name="Nori F."/>
            <person name="Ohara O."/>
            <person name="Okazaki Y."/>
            <person name="Orlando V."/>
            <person name="Pang K.C."/>
            <person name="Pavan W.J."/>
            <person name="Pavesi G."/>
            <person name="Pesole G."/>
            <person name="Petrovsky N."/>
            <person name="Piazza S."/>
            <person name="Reed J."/>
            <person name="Reid J.F."/>
            <person name="Ring B.Z."/>
            <person name="Ringwald M."/>
            <person name="Rost B."/>
            <person name="Ruan Y."/>
            <person name="Salzberg S.L."/>
            <person name="Sandelin A."/>
            <person name="Schneider C."/>
            <person name="Schoenbach C."/>
            <person name="Sekiguchi K."/>
            <person name="Semple C.A."/>
            <person name="Seno S."/>
            <person name="Sessa L."/>
            <person name="Sheng Y."/>
            <person name="Shibata Y."/>
            <person name="Shimada H."/>
            <person name="Shimada K."/>
            <person name="Silva D."/>
            <person name="Sinclair B."/>
            <person name="Sperling S."/>
            <person name="Stupka E."/>
            <person name="Sugiura K."/>
            <person name="Sultana R."/>
            <person name="Takenaka Y."/>
            <person name="Taki K."/>
            <person name="Tammoja K."/>
            <person name="Tan S.L."/>
            <person name="Tang S."/>
            <person name="Taylor M.S."/>
            <person name="Tegner J."/>
            <person name="Teichmann S.A."/>
            <person name="Ueda H.R."/>
            <person name="van Nimwegen E."/>
            <person name="Verardo R."/>
            <person name="Wei C.L."/>
            <person name="Yagi K."/>
            <person name="Yamanishi H."/>
            <person name="Zabarovsky E."/>
            <person name="Zhu S."/>
            <person name="Zimmer A."/>
            <person name="Hide W."/>
            <person name="Bult C."/>
            <person name="Grimmond S.M."/>
            <person name="Teasdale R.D."/>
            <person name="Liu E.T."/>
            <person name="Brusic V."/>
            <person name="Quackenbush J."/>
            <person name="Wahlestedt C."/>
            <person name="Mattick J.S."/>
            <person name="Hume D.A."/>
            <person name="Kai C."/>
            <person name="Sasaki D."/>
            <person name="Tomaru Y."/>
            <person name="Fukuda S."/>
            <person name="Kanamori-Katayama M."/>
            <person name="Suzuki M."/>
            <person name="Aoki J."/>
            <person name="Arakawa T."/>
            <person name="Iida J."/>
            <person name="Imamura K."/>
            <person name="Itoh M."/>
            <person name="Kato T."/>
            <person name="Kawaji H."/>
            <person name="Kawagashira N."/>
            <person name="Kawashima T."/>
            <person name="Kojima M."/>
            <person name="Kondo S."/>
            <person name="Konno H."/>
            <person name="Nakano K."/>
            <person name="Ninomiya N."/>
            <person name="Nishio T."/>
            <person name="Okada M."/>
            <person name="Plessy C."/>
            <person name="Shibata K."/>
            <person name="Shiraki T."/>
            <person name="Suzuki S."/>
            <person name="Tagami M."/>
            <person name="Waki K."/>
            <person name="Watahiki A."/>
            <person name="Okamura-Oho Y."/>
            <person name="Suzuki H."/>
            <person name="Kawai J."/>
            <person name="Hayashizaki Y."/>
        </authorList>
    </citation>
    <scope>NUCLEOTIDE SEQUENCE [LARGE SCALE MRNA] (ISOFORM 2)</scope>
    <scope>NUCLEOTIDE SEQUENCE [LARGE SCALE MRNA] OF 3618-4128</scope>
    <source>
        <strain>C57BL/6J</strain>
        <strain>NOD</strain>
        <tissue>Heart</tissue>
        <tissue>Thymus</tissue>
    </source>
</reference>
<reference key="5">
    <citation type="journal article" date="2009" name="PLoS Biol.">
        <title>Lineage-specific biology revealed by a finished genome assembly of the mouse.</title>
        <authorList>
            <person name="Church D.M."/>
            <person name="Goodstadt L."/>
            <person name="Hillier L.W."/>
            <person name="Zody M.C."/>
            <person name="Goldstein S."/>
            <person name="She X."/>
            <person name="Bult C.J."/>
            <person name="Agarwala R."/>
            <person name="Cherry J.L."/>
            <person name="DiCuccio M."/>
            <person name="Hlavina W."/>
            <person name="Kapustin Y."/>
            <person name="Meric P."/>
            <person name="Maglott D."/>
            <person name="Birtle Z."/>
            <person name="Marques A.C."/>
            <person name="Graves T."/>
            <person name="Zhou S."/>
            <person name="Teague B."/>
            <person name="Potamousis K."/>
            <person name="Churas C."/>
            <person name="Place M."/>
            <person name="Herschleb J."/>
            <person name="Runnheim R."/>
            <person name="Forrest D."/>
            <person name="Amos-Landgraf J."/>
            <person name="Schwartz D.C."/>
            <person name="Cheng Z."/>
            <person name="Lindblad-Toh K."/>
            <person name="Eichler E.E."/>
            <person name="Ponting C.P."/>
        </authorList>
    </citation>
    <scope>NUCLEOTIDE SEQUENCE [LARGE SCALE GENOMIC DNA]</scope>
    <source>
        <strain>C57BL/6J</strain>
    </source>
</reference>
<reference key="6">
    <citation type="journal article" date="1998" name="Mamm. Genome">
        <title>Mouse Cdc21 only 0.5 kb upstream from DNA-PKcs in a head-to-head organization: an implication of co-evolution of ATM family members and cell cycle regulating genes.</title>
        <authorList>
            <person name="Saito T."/>
            <person name="Matsuda Y."/>
            <person name="Ishii H."/>
            <person name="Watanabe F."/>
            <person name="Mori M."/>
            <person name="Hayashi A."/>
            <person name="Araki R."/>
            <person name="Fujimori A."/>
            <person name="Fukumura R."/>
            <person name="Morimyo M."/>
            <person name="Tatsumi K."/>
            <person name="Hori T."/>
            <person name="Abe M."/>
        </authorList>
    </citation>
    <scope>NUCLEOTIDE SEQUENCE [GENOMIC DNA] OF 1-26</scope>
</reference>
<reference key="7">
    <citation type="journal article" date="2006" name="Acta Biochim. Pol.">
        <title>Nonhomologous end-joining deficiency of L5178Y-S cells is not associated with mutation in the ABCDE autophosphorylation cluster.</title>
        <authorList>
            <person name="Brzoska K."/>
            <person name="Kruszewski M."/>
            <person name="Szumiel I."/>
        </authorList>
    </citation>
    <scope>NUCLEOTIDE SEQUENCE [MRNA] OF 2550-2658</scope>
</reference>
<reference key="8">
    <citation type="journal article" date="1996" name="Immunogenetics">
        <title>Cloning and chromosomal mapping of the mouse DNA-dependent protein kinase gene.</title>
        <authorList>
            <person name="Hamatani K."/>
            <person name="Matsuda Y."/>
            <person name="Araki R."/>
            <person name="Itoh M."/>
            <person name="Abe M."/>
        </authorList>
    </citation>
    <scope>NUCLEOTIDE SEQUENCE [MRNA] OF 3615-4128</scope>
    <source>
        <strain>BALB/cJ</strain>
        <tissue>Leukocyte</tissue>
    </source>
</reference>
<reference key="9">
    <citation type="journal article" date="1996" name="Proc. Natl. Acad. Sci. U.S.A.">
        <title>Identification of a nonsense mutation in the carboxyl-terminal region of DNA-dependent protein kinase catalytic subunit in the scid mouse.</title>
        <authorList>
            <person name="Blunt T."/>
            <person name="Gell D."/>
            <person name="Fox M."/>
            <person name="Taccioli G.E."/>
            <person name="Lehmann A.R."/>
            <person name="Jackson S.P."/>
            <person name="Jeggo P.A."/>
        </authorList>
    </citation>
    <scope>NUCLEOTIDE SEQUENCE [MRNA] OF 3680-4128</scope>
</reference>
<reference key="10">
    <citation type="journal article" date="1996" name="Mol. Cell. Biol.">
        <title>Biochemical and genetic defects in the DNA-dependent protein kinase in murine scid lymphocytes.</title>
        <authorList>
            <person name="Danska J.S."/>
            <person name="Holland D.P."/>
            <person name="Mariathasan S."/>
            <person name="Williams K.M."/>
            <person name="Guidos C.J."/>
        </authorList>
    </citation>
    <scope>NUCLEOTIDE SEQUENCE [MRNA] OF 3839-4128</scope>
    <source>
        <strain>C.B17</strain>
    </source>
</reference>
<reference key="11">
    <citation type="journal article" date="1997" name="Nature">
        <title>Functional interaction between DNA-PK and c-Abl in response to DNA damage.</title>
        <authorList>
            <person name="Kharbanda S."/>
            <person name="Pandey P."/>
            <person name="Jin S."/>
            <person name="Inoue S."/>
            <person name="Bharti A."/>
            <person name="Yuan Z.-M."/>
            <person name="Weichselbaum R."/>
            <person name="Weaver D."/>
            <person name="Kufe D."/>
        </authorList>
    </citation>
    <scope>PHOSPHORYLATION OF ABL1</scope>
</reference>
<reference key="12">
    <citation type="journal article" date="2002" name="EMBO J.">
        <title>Functional interaction between DNA-PKcs and telomerase in telomere length maintenance.</title>
        <authorList>
            <person name="Espejel S."/>
            <person name="Franco S."/>
            <person name="Sgura A."/>
            <person name="Gae D."/>
            <person name="Bailey S.M."/>
            <person name="Taccioli G.E."/>
            <person name="Blasco M.A."/>
        </authorList>
    </citation>
    <scope>FUNCTION</scope>
</reference>
<reference key="13">
    <citation type="journal article" date="2010" name="Cell">
        <title>A tissue-specific atlas of mouse protein phosphorylation and expression.</title>
        <authorList>
            <person name="Huttlin E.L."/>
            <person name="Jedrychowski M.P."/>
            <person name="Elias J.E."/>
            <person name="Goswami T."/>
            <person name="Rad R."/>
            <person name="Beausoleil S.A."/>
            <person name="Villen J."/>
            <person name="Haas W."/>
            <person name="Sowa M.E."/>
            <person name="Gygi S.P."/>
        </authorList>
    </citation>
    <scope>IDENTIFICATION BY MASS SPECTROMETRY [LARGE SCALE ANALYSIS]</scope>
    <source>
        <tissue>Brain</tissue>
        <tissue>Brown adipose tissue</tissue>
        <tissue>Kidney</tissue>
        <tissue>Liver</tissue>
        <tissue>Lung</tissue>
        <tissue>Spleen</tissue>
        <tissue>Testis</tissue>
    </source>
</reference>
<reference key="14">
    <citation type="journal article" date="2010" name="Nat. Cell Biol.">
        <title>GAPDH mediates nitrosylation of nuclear proteins.</title>
        <authorList>
            <person name="Kornberg M.D."/>
            <person name="Sen N."/>
            <person name="Hara M.R."/>
            <person name="Juluri K.R."/>
            <person name="Nguyen J.V."/>
            <person name="Snowman A.M."/>
            <person name="Law L."/>
            <person name="Hester L.D."/>
            <person name="Snyder S.H."/>
        </authorList>
    </citation>
    <scope>S-NITROSYLATION BY GAPDH</scope>
</reference>
<reference key="15">
    <citation type="journal article" date="2013" name="J. Biol. Chem.">
        <title>Phosphorylation of the cryptochrome 1 C-terminal tail regulates circadian period length.</title>
        <authorList>
            <person name="Gao P."/>
            <person name="Yoo S.H."/>
            <person name="Lee K.J."/>
            <person name="Rosensweig C."/>
            <person name="Takahashi J.S."/>
            <person name="Chen B.P."/>
            <person name="Green C.B."/>
        </authorList>
    </citation>
    <scope>FUNCTION IN CIRCADIAN CLOCK</scope>
    <scope>INTERACTION WITH CRY1 AND CRY2</scope>
</reference>
<reference key="16">
    <citation type="journal article" date="2020" name="Nature">
        <title>DNA-PKcs has KU-dependent function in rRNA processing and haematopoiesis.</title>
        <authorList>
            <person name="Shao Z."/>
            <person name="Flynn R.A."/>
            <person name="Crowe J.L."/>
            <person name="Zhu Y."/>
            <person name="Liang J."/>
            <person name="Jiang W."/>
            <person name="Aryan F."/>
            <person name="Aoude P."/>
            <person name="Bertozzi C.R."/>
            <person name="Estes V.M."/>
            <person name="Lee B.J."/>
            <person name="Bhagat G."/>
            <person name="Zha S."/>
            <person name="Calo E."/>
        </authorList>
    </citation>
    <scope>DISRUPTION PHENOTYPE</scope>
    <scope>MUTAGENESIS OF SER-2026; SER-2038; 2050-SER--SER-2053; THR-2605; 2614-THR--THR-2616; THR-2634; THR-2643 AND ASP-3922</scope>
</reference>
<sequence length="4128" mass="471471">MAEEGTGVRCWLLQLQEFLSAADRCSAAGASYQLIRSLGQECVLSTSSAVQALQISLVFSRDFGLLVFIRKSLSIEDFRDCREEALKFLCVFLEKIDQKVMHYSLDIKNTCTSVYTKDRTAKCKIPALDLLIKLLQILRSTRLMDEFKIGELFNKFYGELASKSKLPDTVLEKVYELLGVLGEVHPSEMINHSENLFRAFLGELKTQMTSTVREPKFPVLAGCLKGLSSLLCNFTKSMEEDPQTSKEIFGFTFKAIRPQIEMKRYAVPLAGLRLLTLHASQFTACLLDNYITLFEVLSKWCSHTNVELKKAAHSALESFLRQISFTVAEDAELHKSRLKYFMEQFYGIIRNTDSNNKELAIAIRGYGLFAGPCKVINAKDVDFMYVELIQRCKQMFLTHADASEDHVYQMPSFLQSIASVLLYLDTVPEVYTPVLEHLMVVQIDSFPQYSPKMQLVCCKAIIKLFLALSEKGPVHWNCISAVVHQGLIRICSKPVVLQKDVESRSDNRSASEEVRTGRWKVPTYKDYVDLFQHLLGCDQMEDFILGDETFLFVNSSLKSLNHLLYDEFIRSVLKIVEKLDLTLEKQTVGEQEDGSTADVWVIPTSDPAANLHPAKPSDFSALINLVEFCREILPRKHVGFFEPWVYSFAYELILQSTRLPLISGFYKLLSIAVKNARKIKYFEGISPKSLKHSPEDTEKYSCFALFAKFGKEVSVKMKQYKDELLASCLTFVLSLPHDIIELDVRAYVPALQMAFKLGLSHMPLAEIGLHALKEWSVHIDKSILQPYYKDILPCLDGYLNTSTLSDETKSHWGLSALSRAAQKGFNRHVVKHLKRTRNSSPDEALSLEEIRIKVVQILGSLGGQINKSLVTATSGERMKKYVAWDAERRLSFAVPFREMKPVIYLDVFLPRVTELALSASDRQTKVAACELLHSMVMFMLGRATQMPEGQGLPPMYQLYKHTFPVLLQLACDVDQVTRQLYEPLVMQLIHWLTNNKKFESQDTVALLEAILDGIVDPVDSTLRDFCGRCVQEFLKWSIKQTTPQQQEKSPVNSKSLFKRLYSLALHPNAFKRLGAALAFNHIYKEFREEGSLVEQFVFEALVTYMESLALAHEDEKSLGTVQQCCDAIDHLRRIIEKKHVSLNKAKKRRLPQGFPPLTSLCLLDLVEWLLAHCGRPQTECRHKSMELFYKFVPLLPGNKSPSLWLKDLIKKKGISFLINTFEGGASSSDQPAGILAQPTLVYLQGPISLRGVLQWLDLLLAALECYNTFIEKETVQGQEVLGAEVQSSLLKSVAFFLESIATHSARAVEQRFGSGAPGPPSLHEEEKYNYSKCTVLVRIMEFTTTLLIASPEDCKLLEKDLCNTNLMQVLVKMICEPMSLGFNIGDVQVMNHLPSICVNLLKALRKSPYRDMLETHLKEKVTVQSVEELCSINLCSSGARQERSKLLSILSACKQLHKAGFSHVISPSQSTALNHSVGMRLLSLVYKGIVPAEERQCLQSLDPSCKSLANGLLELAFGFGGLCDHLVSLLLNSAMLSTQYLGSSQRNISFSHGEYFYSLFSEVINSELLKNLDIAVSRLMESSSDNPKMVSTVLNGMLDTSFRDRAVQKHQGLKLATAILQNWRKCDSWWAPDSAPESKTTVLSLLAKMLQIDSALSFDTNHSSFSEIFTTYASLLADTKLGLHLKGQAIILLPFFTSLREGSLENLKHILEKLIVCNFPMKSDEFPPDSLKYNNYVDCMKKFLDALELSQSPMLFQLMTDILCREQRHIMEELFQTTFKRIARQSPCVTQLNLLESVYTMFRKADLPSNVTRQAFVDRSLLTLLWHCDLDTLKEFFSRIVVDAIDVLKSRFTKLNEFTFDTQITKKMCYYKMLAVMYSRLLKDDVHSKEAKINQAFHGSRVAEGNELTKTLLKLCHDAFTENMVGESQLLEKRRLYHCAAYNCAISLISCVFNELKFYQGFLFNEKPEKNLFIFENLIDLKRCYTFPIEVEVPMERKKKYIEIRKEARDAANGASGSPHYMSSLSYLTDSSLSEEMSQFDFSTGVQSYSYSSQDRKPTTGHFQRREHQDSMTQDDIMELEMDELNQHECMAPMIALIKHMQRNVIAPKGEEGSIPKDLPPWMKFLHDKLGNASVSLNIRLFLAKLVINTEEVFRPYAKHWLSPLLQLAVCENNREGIHYMMVEIVATILSWTGLATPTGVPKDEVLANRLLRFLMKHVFHPKRAVFRHNLEIIKTLVECWKECLSIPYRLIFEKFSHKDPNSKDNSVGIQLLGIVIANNLPPYDPNCDITSAMYFEALVNNMSFVKYKEVYAAAAEVLGLILQYITERKHVIAELVCELVIKQLKQHQNTMEDKFIVCLNKIAKGFPPLADRFLNALFFLLPKFHGVMKTLCLEVVLCRAEEITGLYLQLKSKDFLQVMRHRDDERQKVCLDIVYKMVAKLKPIELRELLNPVVEFVSHPSPTCREQMYNILMWIHDNYRDQESQNDEDSQEIFKLAKDVLIQGLIDENVGLQLIIRNFWSHETRLPSNTLDRLLALNSLYSPKIEVHFLSLATNFLLEMTRMSPDYLNPIFEHPLSECEFQEYTIDPDWRFRSTVLTPMFIETQASPSILHTQTQEGPLSDQRQKPGQVRATQQQYDFTPTQASVERSSFDWLTGSSIDLLADHTVFSSETLSSSLLFSHKRTEKSQRMSCKSVGPDFGTKKLGLPDDEVDNQVKSGTPSQADILRLRRRFLKDREKLSLLYAKRGLMEQKLEKDIKSEFKMKQDAQVVLYRSYRHGDLPDIQIQHSGLITPLQAVAQKDPIIAKQLFSSLFSGILKEMNKFKTTSEKNIITQNLLQDFNRFLNTTFLFFPPFVSCIQEISCQHPDFLTLDPASVRVGCLASLQQPGGIRLLEEALLRLMPKEPPTKRVRGKTCLPPDVLRWMELAKLYRSIGEYDVLRGIFSSELGTTQDTQNALLAEARSDYCQAAKLYDEALNKLEWVDGEPTEAEKEFWELASLDCYNNLSKWKELEYCSTVNIVSENSLDLSKMWSEPFYQETYLPYVIRSKLKLLLQGEGNQSLLTFVDEAMNKELQKTVLELQYSQELSLLYILQDDIDRATYYIKNGIQIFMQNYSSIDVLLYRSRLAKLQSVQTLAEIEEFLSFICKHGDLSSLGPLRRLLKTWTSRYPDVVTDPMHIWDDIITNRCFFLSKIEERLTAPSGDHSMSVDEDEESIDREVYEPKEDVRCMLQSCRFTMKMKMIESAWKQSNFSLSMKLLKEMHKESKTREIWRVQWLHSYSQLNHCRSHTQSPREQVLNMLKTITLLDESDISNYLNKNIQASCDQSILLGTTCRIMADALSREPACLSDLEENKVNSILTLSGSNAENTETVITGLYQRAFHHLSKAVQSAEEETQLSCWGHEAAAERAHAYMTLVGFCDQQLRKVEESASQKTSAEMEAYPALVVEKMLRALKLNSSEARLKFPRLLQIIEQYSEETLNIMTKEISSIPCWQFIGWISHMMALLDKEEAIAVQHTVEEIADNYPQAIIYPFIISSESYSFKNTSSGHNNKAFVERIKSKLDHGEVIHSFINALDQLSNPDLLFKDWVSDTKDELGKNPVNKKNIEKLYERMYAALGDLRAPGLGPFRRRFIQAFGKEFVKSFGNGGSKLLTMKVDDFCKITGSLLVRMKKDSKLPGNLKEYSPWMSEFKAQFLKNELEIPGQYDGKSKPLPEYHVRISGFDERVKVMLSLRKPKRIVIRGHDEKEYPFLVKGGEDLRQDQRIEQIFEVMNAILSQDAACSQRNMQLRTYRVVPMTSRLGLIEWIENTMTLKDLLLSNMSQEEKVANNSDPKAPIRDYKDWLMKVSGKSDAGAYVLMYSRANRTETVVAFRRRESQVPPDLLKRAFVKMSTSPEAFLALRSHFASSHALLCISHWLLGIGDRHLNNFMVAMETGSVIGIDFGHAFGSATQFLPVPELMPFRLTRQFVSLMLPMKETGLMCTVMVHALRAFRSCAGLLTDTMEIFVKEPSFDWKSFEQTMLRKGGSWIQEINVTEKNWYPQHKIRYAKRKLAGANPAVITCDELYLGHEASSAFRSYTAVARGNRDYNIRAQEPESGLSEETQVKCLVDQATDPNILGRTWEGWEPWM</sequence>
<accession>P97313</accession>
<accession>E9QN15</accession>
<accession>O88187</accession>
<accession>P97928</accession>
<accession>Q307W9</accession>
<accession>Q3V2W8</accession>
<accession>Q8C2A7</accession>
<accession>Q9Z341</accession>
<dbReference type="EC" id="2.7.11.1" evidence="1"/>
<dbReference type="EMBL" id="D87521">
    <property type="protein sequence ID" value="BAA19566.1"/>
    <property type="molecule type" value="mRNA"/>
</dbReference>
<dbReference type="EMBL" id="AB007544">
    <property type="protein sequence ID" value="BAA28873.1"/>
    <property type="molecule type" value="mRNA"/>
</dbReference>
<dbReference type="EMBL" id="AB011543">
    <property type="protein sequence ID" value="BAA28875.1"/>
    <property type="molecule type" value="mRNA"/>
</dbReference>
<dbReference type="EMBL" id="AB030754">
    <property type="protein sequence ID" value="BAB91149.1"/>
    <property type="molecule type" value="Genomic_DNA"/>
</dbReference>
<dbReference type="EMBL" id="AK084827">
    <property type="protein sequence ID" value="BAE43387.1"/>
    <property type="molecule type" value="mRNA"/>
</dbReference>
<dbReference type="EMBL" id="AK088981">
    <property type="protein sequence ID" value="BAC40685.1"/>
    <property type="molecule type" value="mRNA"/>
</dbReference>
<dbReference type="EMBL" id="AC111103">
    <property type="status" value="NOT_ANNOTATED_CDS"/>
    <property type="molecule type" value="Genomic_DNA"/>
</dbReference>
<dbReference type="EMBL" id="AC154586">
    <property type="status" value="NOT_ANNOTATED_CDS"/>
    <property type="molecule type" value="Genomic_DNA"/>
</dbReference>
<dbReference type="EMBL" id="CT010522">
    <property type="status" value="NOT_ANNOTATED_CDS"/>
    <property type="molecule type" value="Genomic_DNA"/>
</dbReference>
<dbReference type="EMBL" id="CT030649">
    <property type="status" value="NOT_ANNOTATED_CDS"/>
    <property type="molecule type" value="Genomic_DNA"/>
</dbReference>
<dbReference type="EMBL" id="AB000629">
    <property type="protein sequence ID" value="BAA34640.1"/>
    <property type="molecule type" value="Genomic_DNA"/>
</dbReference>
<dbReference type="EMBL" id="DQ235257">
    <property type="protein sequence ID" value="ABB36568.1"/>
    <property type="molecule type" value="mRNA"/>
</dbReference>
<dbReference type="EMBL" id="DQ235258">
    <property type="protein sequence ID" value="ABB36569.1"/>
    <property type="molecule type" value="mRNA"/>
</dbReference>
<dbReference type="EMBL" id="D83786">
    <property type="protein sequence ID" value="BAA12115.1"/>
    <property type="molecule type" value="mRNA"/>
</dbReference>
<dbReference type="EMBL" id="U78157">
    <property type="protein sequence ID" value="AAB36939.1"/>
    <property type="molecule type" value="mRNA"/>
</dbReference>
<dbReference type="EMBL" id="U78158">
    <property type="protein sequence ID" value="AAB36940.1"/>
    <property type="molecule type" value="mRNA"/>
</dbReference>
<dbReference type="CCDS" id="CCDS27978.1">
    <molecule id="P97313-1"/>
</dbReference>
<dbReference type="PIR" id="JC6306">
    <property type="entry name" value="JC6306"/>
</dbReference>
<dbReference type="RefSeq" id="NP_035289.2">
    <molecule id="P97313-1"/>
    <property type="nucleotide sequence ID" value="NM_011159.2"/>
</dbReference>
<dbReference type="SMR" id="P97313"/>
<dbReference type="BioGRID" id="202371">
    <property type="interactions" value="13"/>
</dbReference>
<dbReference type="ComplexPortal" id="CPX-3424">
    <property type="entry name" value="DNA-dependent protein kinase complex"/>
</dbReference>
<dbReference type="CORUM" id="P97313"/>
<dbReference type="FunCoup" id="P97313">
    <property type="interactions" value="3106"/>
</dbReference>
<dbReference type="IntAct" id="P97313">
    <property type="interactions" value="7"/>
</dbReference>
<dbReference type="MINT" id="P97313"/>
<dbReference type="STRING" id="10090.ENSMUSP00000023352"/>
<dbReference type="BindingDB" id="P97313"/>
<dbReference type="ChEMBL" id="CHEMBL2176779"/>
<dbReference type="GuidetoPHARMACOLOGY" id="2800"/>
<dbReference type="GlyGen" id="P97313">
    <property type="glycosylation" value="3 sites, 3 N-linked glycans (3 sites)"/>
</dbReference>
<dbReference type="iPTMnet" id="P97313"/>
<dbReference type="PhosphoSitePlus" id="P97313"/>
<dbReference type="PaxDb" id="10090-ENSMUSP00000023352"/>
<dbReference type="PeptideAtlas" id="P97313"/>
<dbReference type="ProteomicsDB" id="289411">
    <molecule id="P97313-1"/>
</dbReference>
<dbReference type="ProteomicsDB" id="289412">
    <molecule id="P97313-2"/>
</dbReference>
<dbReference type="Pumba" id="P97313"/>
<dbReference type="Antibodypedia" id="52433">
    <property type="antibodies" value="1571 antibodies from 44 providers"/>
</dbReference>
<dbReference type="DNASU" id="19090"/>
<dbReference type="Ensembl" id="ENSMUST00000023352.9">
    <molecule id="P97313-1"/>
    <property type="protein sequence ID" value="ENSMUSP00000023352.8"/>
    <property type="gene ID" value="ENSMUSG00000022672.9"/>
</dbReference>
<dbReference type="GeneID" id="19090"/>
<dbReference type="KEGG" id="mmu:19090"/>
<dbReference type="UCSC" id="uc007yhs.1">
    <molecule id="P97313-2"/>
    <property type="organism name" value="mouse"/>
</dbReference>
<dbReference type="UCSC" id="uc007yht.1">
    <molecule id="P97313-1"/>
    <property type="organism name" value="mouse"/>
</dbReference>
<dbReference type="AGR" id="MGI:104779"/>
<dbReference type="CTD" id="5591"/>
<dbReference type="MGI" id="MGI:104779">
    <property type="gene designation" value="Prkdc"/>
</dbReference>
<dbReference type="VEuPathDB" id="HostDB:ENSMUSG00000022672"/>
<dbReference type="eggNOG" id="KOG0891">
    <property type="taxonomic scope" value="Eukaryota"/>
</dbReference>
<dbReference type="GeneTree" id="ENSGT00940000155633"/>
<dbReference type="HOGENOM" id="CLU_224534_0_0_1"/>
<dbReference type="InParanoid" id="P97313"/>
<dbReference type="OMA" id="PSPMCRE"/>
<dbReference type="OrthoDB" id="431717at2759"/>
<dbReference type="PhylomeDB" id="P97313"/>
<dbReference type="TreeFam" id="TF324494"/>
<dbReference type="Reactome" id="R-MMU-5693571">
    <property type="pathway name" value="Nonhomologous End-Joining (NHEJ)"/>
</dbReference>
<dbReference type="Reactome" id="R-MMU-8866654">
    <property type="pathway name" value="E3 ubiquitin ligases ubiquitinate target proteins"/>
</dbReference>
<dbReference type="BioGRID-ORCS" id="19090">
    <property type="hits" value="14 hits in 117 CRISPR screens"/>
</dbReference>
<dbReference type="CD-CODE" id="01CA17F3">
    <property type="entry name" value="Centrosome"/>
</dbReference>
<dbReference type="ChiTaRS" id="Prkdc">
    <property type="organism name" value="mouse"/>
</dbReference>
<dbReference type="PRO" id="PR:P97313"/>
<dbReference type="Proteomes" id="UP000000589">
    <property type="component" value="Chromosome 16"/>
</dbReference>
<dbReference type="RNAct" id="P97313">
    <property type="molecule type" value="protein"/>
</dbReference>
<dbReference type="Bgee" id="ENSMUSG00000022672">
    <property type="expression patterns" value="Expressed in olfactory tubercle and 256 other cell types or tissues"/>
</dbReference>
<dbReference type="GO" id="GO:0000785">
    <property type="term" value="C:chromatin"/>
    <property type="evidence" value="ECO:0007669"/>
    <property type="project" value="Ensembl"/>
</dbReference>
<dbReference type="GO" id="GO:0005829">
    <property type="term" value="C:cytosol"/>
    <property type="evidence" value="ECO:0007669"/>
    <property type="project" value="UniProtKB-SubCell"/>
</dbReference>
<dbReference type="GO" id="GO:0070418">
    <property type="term" value="C:DNA-dependent protein kinase complex"/>
    <property type="evidence" value="ECO:0000266"/>
    <property type="project" value="ComplexPortal"/>
</dbReference>
<dbReference type="GO" id="GO:0005958">
    <property type="term" value="C:DNA-dependent protein kinase-DNA ligase 4 complex"/>
    <property type="evidence" value="ECO:0000250"/>
    <property type="project" value="UniProtKB"/>
</dbReference>
<dbReference type="GO" id="GO:0070419">
    <property type="term" value="C:nonhomologous end joining complex"/>
    <property type="evidence" value="ECO:0000250"/>
    <property type="project" value="UniProtKB"/>
</dbReference>
<dbReference type="GO" id="GO:0005730">
    <property type="term" value="C:nucleolus"/>
    <property type="evidence" value="ECO:0007669"/>
    <property type="project" value="UniProtKB-SubCell"/>
</dbReference>
<dbReference type="GO" id="GO:0005654">
    <property type="term" value="C:nucleoplasm"/>
    <property type="evidence" value="ECO:0007669"/>
    <property type="project" value="Ensembl"/>
</dbReference>
<dbReference type="GO" id="GO:0005634">
    <property type="term" value="C:nucleus"/>
    <property type="evidence" value="ECO:0000314"/>
    <property type="project" value="MGI"/>
</dbReference>
<dbReference type="GO" id="GO:0032993">
    <property type="term" value="C:protein-DNA complex"/>
    <property type="evidence" value="ECO:0007669"/>
    <property type="project" value="Ensembl"/>
</dbReference>
<dbReference type="GO" id="GO:0032040">
    <property type="term" value="C:small-subunit processome"/>
    <property type="evidence" value="ECO:0000250"/>
    <property type="project" value="UniProtKB"/>
</dbReference>
<dbReference type="GO" id="GO:0005667">
    <property type="term" value="C:transcription regulator complex"/>
    <property type="evidence" value="ECO:0007669"/>
    <property type="project" value="Ensembl"/>
</dbReference>
<dbReference type="GO" id="GO:0005524">
    <property type="term" value="F:ATP binding"/>
    <property type="evidence" value="ECO:0007669"/>
    <property type="project" value="UniProtKB-KW"/>
</dbReference>
<dbReference type="GO" id="GO:0004677">
    <property type="term" value="F:DNA-dependent protein kinase activity"/>
    <property type="evidence" value="ECO:0000314"/>
    <property type="project" value="MGI"/>
</dbReference>
<dbReference type="GO" id="GO:0003690">
    <property type="term" value="F:double-stranded DNA binding"/>
    <property type="evidence" value="ECO:0000314"/>
    <property type="project" value="MGI"/>
</dbReference>
<dbReference type="GO" id="GO:0019899">
    <property type="term" value="F:enzyme binding"/>
    <property type="evidence" value="ECO:0000353"/>
    <property type="project" value="UniProtKB"/>
</dbReference>
<dbReference type="GO" id="GO:0035979">
    <property type="term" value="F:histone H2AXS139 kinase activity"/>
    <property type="evidence" value="ECO:0000250"/>
    <property type="project" value="UniProtKB"/>
</dbReference>
<dbReference type="GO" id="GO:0019904">
    <property type="term" value="F:protein domain specific binding"/>
    <property type="evidence" value="ECO:0007669"/>
    <property type="project" value="Ensembl"/>
</dbReference>
<dbReference type="GO" id="GO:0106310">
    <property type="term" value="F:protein serine kinase activity"/>
    <property type="evidence" value="ECO:0007669"/>
    <property type="project" value="RHEA"/>
</dbReference>
<dbReference type="GO" id="GO:0061629">
    <property type="term" value="F:RNA polymerase II-specific DNA-binding transcription factor binding"/>
    <property type="evidence" value="ECO:0007669"/>
    <property type="project" value="Ensembl"/>
</dbReference>
<dbReference type="GO" id="GO:0034511">
    <property type="term" value="F:U3 snoRNA binding"/>
    <property type="evidence" value="ECO:0000250"/>
    <property type="project" value="UniProtKB"/>
</dbReference>
<dbReference type="GO" id="GO:0002218">
    <property type="term" value="P:activation of innate immune response"/>
    <property type="evidence" value="ECO:0007669"/>
    <property type="project" value="Ensembl"/>
</dbReference>
<dbReference type="GO" id="GO:0002326">
    <property type="term" value="P:B cell lineage commitment"/>
    <property type="evidence" value="ECO:0000315"/>
    <property type="project" value="MGI"/>
</dbReference>
<dbReference type="GO" id="GO:0007420">
    <property type="term" value="P:brain development"/>
    <property type="evidence" value="ECO:0000316"/>
    <property type="project" value="MGI"/>
</dbReference>
<dbReference type="GO" id="GO:0032869">
    <property type="term" value="P:cellular response to insulin stimulus"/>
    <property type="evidence" value="ECO:0007669"/>
    <property type="project" value="Ensembl"/>
</dbReference>
<dbReference type="GO" id="GO:0006974">
    <property type="term" value="P:DNA damage response"/>
    <property type="evidence" value="ECO:0000250"/>
    <property type="project" value="UniProtKB"/>
</dbReference>
<dbReference type="GO" id="GO:0006302">
    <property type="term" value="P:double-strand break repair"/>
    <property type="evidence" value="ECO:0000315"/>
    <property type="project" value="MGI"/>
</dbReference>
<dbReference type="GO" id="GO:0006303">
    <property type="term" value="P:double-strand break repair via nonhomologous end joining"/>
    <property type="evidence" value="ECO:0000315"/>
    <property type="project" value="MGI"/>
</dbReference>
<dbReference type="GO" id="GO:0035234">
    <property type="term" value="P:ectopic germ cell programmed cell death"/>
    <property type="evidence" value="ECO:0000315"/>
    <property type="project" value="MGI"/>
</dbReference>
<dbReference type="GO" id="GO:0007507">
    <property type="term" value="P:heart development"/>
    <property type="evidence" value="ECO:0000316"/>
    <property type="project" value="MGI"/>
</dbReference>
<dbReference type="GO" id="GO:0002327">
    <property type="term" value="P:immature B cell differentiation"/>
    <property type="evidence" value="ECO:0000315"/>
    <property type="project" value="MGI"/>
</dbReference>
<dbReference type="GO" id="GO:0033152">
    <property type="term" value="P:immunoglobulin V(D)J recombination"/>
    <property type="evidence" value="ECO:0000315"/>
    <property type="project" value="MGI"/>
</dbReference>
<dbReference type="GO" id="GO:0045087">
    <property type="term" value="P:innate immune response"/>
    <property type="evidence" value="ECO:0007669"/>
    <property type="project" value="UniProtKB-KW"/>
</dbReference>
<dbReference type="GO" id="GO:0008630">
    <property type="term" value="P:intrinsic apoptotic signaling pathway in response to DNA damage"/>
    <property type="evidence" value="ECO:0000315"/>
    <property type="project" value="MGI"/>
</dbReference>
<dbReference type="GO" id="GO:0030098">
    <property type="term" value="P:lymphocyte differentiation"/>
    <property type="evidence" value="ECO:0000315"/>
    <property type="project" value="MGI"/>
</dbReference>
<dbReference type="GO" id="GO:0000460">
    <property type="term" value="P:maturation of 5.8S rRNA"/>
    <property type="evidence" value="ECO:0000250"/>
    <property type="project" value="UniProtKB"/>
</dbReference>
<dbReference type="GO" id="GO:0031571">
    <property type="term" value="P:mitotic G1 DNA damage checkpoint signaling"/>
    <property type="evidence" value="ECO:0000250"/>
    <property type="project" value="UniProtKB"/>
</dbReference>
<dbReference type="GO" id="GO:0043066">
    <property type="term" value="P:negative regulation of apoptotic process"/>
    <property type="evidence" value="ECO:0007669"/>
    <property type="project" value="Ensembl"/>
</dbReference>
<dbReference type="GO" id="GO:2000773">
    <property type="term" value="P:negative regulation of cellular senescence"/>
    <property type="evidence" value="ECO:0007669"/>
    <property type="project" value="Ensembl"/>
</dbReference>
<dbReference type="GO" id="GO:0160049">
    <property type="term" value="P:negative regulation of cGAS/STING signaling pathway"/>
    <property type="evidence" value="ECO:0007669"/>
    <property type="project" value="Ensembl"/>
</dbReference>
<dbReference type="GO" id="GO:0002638">
    <property type="term" value="P:negative regulation of immunoglobulin production"/>
    <property type="evidence" value="ECO:0007669"/>
    <property type="project" value="Ensembl"/>
</dbReference>
<dbReference type="GO" id="GO:0001933">
    <property type="term" value="P:negative regulation of protein phosphorylation"/>
    <property type="evidence" value="ECO:0000315"/>
    <property type="project" value="UniProtKB"/>
</dbReference>
<dbReference type="GO" id="GO:2001229">
    <property type="term" value="P:negative regulation of response to gamma radiation"/>
    <property type="evidence" value="ECO:0007669"/>
    <property type="project" value="Ensembl"/>
</dbReference>
<dbReference type="GO" id="GO:0018105">
    <property type="term" value="P:peptidyl-serine phosphorylation"/>
    <property type="evidence" value="ECO:0000250"/>
    <property type="project" value="UniProtKB"/>
</dbReference>
<dbReference type="GO" id="GO:0018107">
    <property type="term" value="P:peptidyl-threonine phosphorylation"/>
    <property type="evidence" value="ECO:0000250"/>
    <property type="project" value="UniProtKB"/>
</dbReference>
<dbReference type="GO" id="GO:0043065">
    <property type="term" value="P:positive regulation of apoptotic process"/>
    <property type="evidence" value="ECO:0000315"/>
    <property type="project" value="MGI"/>
</dbReference>
<dbReference type="GO" id="GO:0048639">
    <property type="term" value="P:positive regulation of developmental growth"/>
    <property type="evidence" value="ECO:0007669"/>
    <property type="project" value="Ensembl"/>
</dbReference>
<dbReference type="GO" id="GO:2001034">
    <property type="term" value="P:positive regulation of double-strand break repair via nonhomologous end joining"/>
    <property type="evidence" value="ECO:0000250"/>
    <property type="project" value="UniProtKB"/>
</dbReference>
<dbReference type="GO" id="GO:0045648">
    <property type="term" value="P:positive regulation of erythrocyte differentiation"/>
    <property type="evidence" value="ECO:0000315"/>
    <property type="project" value="UniProtKB"/>
</dbReference>
<dbReference type="GO" id="GO:0048146">
    <property type="term" value="P:positive regulation of fibroblast proliferation"/>
    <property type="evidence" value="ECO:0007669"/>
    <property type="project" value="Ensembl"/>
</dbReference>
<dbReference type="GO" id="GO:0045621">
    <property type="term" value="P:positive regulation of lymphocyte differentiation"/>
    <property type="evidence" value="ECO:0000315"/>
    <property type="project" value="UniProtKB"/>
</dbReference>
<dbReference type="GO" id="GO:1905221">
    <property type="term" value="P:positive regulation of platelet formation"/>
    <property type="evidence" value="ECO:0000315"/>
    <property type="project" value="UniProtKB"/>
</dbReference>
<dbReference type="GO" id="GO:0045944">
    <property type="term" value="P:positive regulation of transcription by RNA polymerase II"/>
    <property type="evidence" value="ECO:0007669"/>
    <property type="project" value="Ensembl"/>
</dbReference>
<dbReference type="GO" id="GO:0045727">
    <property type="term" value="P:positive regulation of translation"/>
    <property type="evidence" value="ECO:0000315"/>
    <property type="project" value="UniProtKB"/>
</dbReference>
<dbReference type="GO" id="GO:0002328">
    <property type="term" value="P:pro-B cell differentiation"/>
    <property type="evidence" value="ECO:0000315"/>
    <property type="project" value="MGI"/>
</dbReference>
<dbReference type="GO" id="GO:0031648">
    <property type="term" value="P:protein destabilization"/>
    <property type="evidence" value="ECO:0000314"/>
    <property type="project" value="MGI"/>
</dbReference>
<dbReference type="GO" id="GO:0042752">
    <property type="term" value="P:regulation of circadian rhythm"/>
    <property type="evidence" value="ECO:0000315"/>
    <property type="project" value="UniProtKB"/>
</dbReference>
<dbReference type="GO" id="GO:0050678">
    <property type="term" value="P:regulation of epithelial cell proliferation"/>
    <property type="evidence" value="ECO:0007669"/>
    <property type="project" value="Ensembl"/>
</dbReference>
<dbReference type="GO" id="GO:1902036">
    <property type="term" value="P:regulation of hematopoietic stem cell differentiation"/>
    <property type="evidence" value="ECO:0000315"/>
    <property type="project" value="UniProtKB"/>
</dbReference>
<dbReference type="GO" id="GO:0048660">
    <property type="term" value="P:regulation of smooth muscle cell proliferation"/>
    <property type="evidence" value="ECO:0000250"/>
    <property type="project" value="UniProtKB"/>
</dbReference>
<dbReference type="GO" id="GO:0014823">
    <property type="term" value="P:response to activity"/>
    <property type="evidence" value="ECO:0007669"/>
    <property type="project" value="Ensembl"/>
</dbReference>
<dbReference type="GO" id="GO:0010332">
    <property type="term" value="P:response to gamma radiation"/>
    <property type="evidence" value="ECO:0000315"/>
    <property type="project" value="MGI"/>
</dbReference>
<dbReference type="GO" id="GO:0010212">
    <property type="term" value="P:response to ionizing radiation"/>
    <property type="evidence" value="ECO:0000315"/>
    <property type="project" value="MGI"/>
</dbReference>
<dbReference type="GO" id="GO:0048511">
    <property type="term" value="P:rhythmic process"/>
    <property type="evidence" value="ECO:0007669"/>
    <property type="project" value="UniProtKB-KW"/>
</dbReference>
<dbReference type="GO" id="GO:0034462">
    <property type="term" value="P:small-subunit processome assembly"/>
    <property type="evidence" value="ECO:0000250"/>
    <property type="project" value="UniProtKB"/>
</dbReference>
<dbReference type="GO" id="GO:0001756">
    <property type="term" value="P:somitogenesis"/>
    <property type="evidence" value="ECO:0000316"/>
    <property type="project" value="MGI"/>
</dbReference>
<dbReference type="GO" id="GO:0048536">
    <property type="term" value="P:spleen development"/>
    <property type="evidence" value="ECO:0007669"/>
    <property type="project" value="Ensembl"/>
</dbReference>
<dbReference type="GO" id="GO:0033077">
    <property type="term" value="P:T cell differentiation in thymus"/>
    <property type="evidence" value="ECO:0000315"/>
    <property type="project" value="MGI"/>
</dbReference>
<dbReference type="GO" id="GO:0002360">
    <property type="term" value="P:T cell lineage commitment"/>
    <property type="evidence" value="ECO:0000315"/>
    <property type="project" value="MGI"/>
</dbReference>
<dbReference type="GO" id="GO:0033153">
    <property type="term" value="P:T cell receptor V(D)J recombination"/>
    <property type="evidence" value="ECO:0000315"/>
    <property type="project" value="MGI"/>
</dbReference>
<dbReference type="GO" id="GO:0016233">
    <property type="term" value="P:telomere capping"/>
    <property type="evidence" value="ECO:0007669"/>
    <property type="project" value="Ensembl"/>
</dbReference>
<dbReference type="GO" id="GO:0000723">
    <property type="term" value="P:telomere maintenance"/>
    <property type="evidence" value="ECO:0000315"/>
    <property type="project" value="MGI"/>
</dbReference>
<dbReference type="GO" id="GO:0048538">
    <property type="term" value="P:thymus development"/>
    <property type="evidence" value="ECO:0007669"/>
    <property type="project" value="Ensembl"/>
</dbReference>
<dbReference type="GO" id="GO:0033151">
    <property type="term" value="P:V(D)J recombination"/>
    <property type="evidence" value="ECO:0000316"/>
    <property type="project" value="MGI"/>
</dbReference>
<dbReference type="CDD" id="cd05172">
    <property type="entry name" value="PIKKc_DNA-PK"/>
    <property type="match status" value="1"/>
</dbReference>
<dbReference type="FunFam" id="1.10.1070.11:FF:000018">
    <property type="entry name" value="DNA-dependent protein kinase catalytic subunit"/>
    <property type="match status" value="1"/>
</dbReference>
<dbReference type="FunFam" id="3.30.1010.10:FF:000013">
    <property type="entry name" value="Protein kinase, DNA-activated, catalytic subunit"/>
    <property type="match status" value="1"/>
</dbReference>
<dbReference type="Gene3D" id="1.10.1070.11">
    <property type="entry name" value="Phosphatidylinositol 3-/4-kinase, catalytic domain"/>
    <property type="match status" value="1"/>
</dbReference>
<dbReference type="Gene3D" id="3.30.1010.10">
    <property type="entry name" value="Phosphatidylinositol 3-kinase Catalytic Subunit, Chain A, domain 4"/>
    <property type="match status" value="1"/>
</dbReference>
<dbReference type="InterPro" id="IPR016024">
    <property type="entry name" value="ARM-type_fold"/>
</dbReference>
<dbReference type="InterPro" id="IPR050517">
    <property type="entry name" value="DDR_Repair_Kinase"/>
</dbReference>
<dbReference type="InterPro" id="IPR037706">
    <property type="entry name" value="DNA-PK_dom"/>
</dbReference>
<dbReference type="InterPro" id="IPR046804">
    <property type="entry name" value="DNA-PKcs_N"/>
</dbReference>
<dbReference type="InterPro" id="IPR046803">
    <property type="entry name" value="DNAPKcs_CC1-2"/>
</dbReference>
<dbReference type="InterPro" id="IPR012582">
    <property type="entry name" value="DNAPKcs_CC3"/>
</dbReference>
<dbReference type="InterPro" id="IPR045581">
    <property type="entry name" value="DNAPKcs_CC5"/>
</dbReference>
<dbReference type="InterPro" id="IPR003152">
    <property type="entry name" value="FATC_dom"/>
</dbReference>
<dbReference type="InterPro" id="IPR011009">
    <property type="entry name" value="Kinase-like_dom_sf"/>
</dbReference>
<dbReference type="InterPro" id="IPR000403">
    <property type="entry name" value="PI3/4_kinase_cat_dom"/>
</dbReference>
<dbReference type="InterPro" id="IPR036940">
    <property type="entry name" value="PI3/4_kinase_cat_sf"/>
</dbReference>
<dbReference type="InterPro" id="IPR018936">
    <property type="entry name" value="PI3/4_kinase_CS"/>
</dbReference>
<dbReference type="InterPro" id="IPR003151">
    <property type="entry name" value="PIK-rel_kinase_FAT"/>
</dbReference>
<dbReference type="InterPro" id="IPR014009">
    <property type="entry name" value="PIK_FAT"/>
</dbReference>
<dbReference type="PANTHER" id="PTHR11139">
    <property type="entry name" value="ATAXIA TELANGIECTASIA MUTATED ATM -RELATED"/>
    <property type="match status" value="1"/>
</dbReference>
<dbReference type="PANTHER" id="PTHR11139:SF68">
    <property type="entry name" value="DNA-DEPENDENT PROTEIN KINASE CATALYTIC SUBUNIT"/>
    <property type="match status" value="1"/>
</dbReference>
<dbReference type="Pfam" id="PF20500">
    <property type="entry name" value="DNA-PKcs_N"/>
    <property type="match status" value="1"/>
</dbReference>
<dbReference type="Pfam" id="PF20502">
    <property type="entry name" value="DNAPKcs_CC1-2"/>
    <property type="match status" value="1"/>
</dbReference>
<dbReference type="Pfam" id="PF08163">
    <property type="entry name" value="DNAPKcs_CC3"/>
    <property type="match status" value="1"/>
</dbReference>
<dbReference type="Pfam" id="PF19704">
    <property type="entry name" value="DNAPKcs_CC5"/>
    <property type="match status" value="1"/>
</dbReference>
<dbReference type="Pfam" id="PF02259">
    <property type="entry name" value="FAT"/>
    <property type="match status" value="1"/>
</dbReference>
<dbReference type="Pfam" id="PF02260">
    <property type="entry name" value="FATC"/>
    <property type="match status" value="1"/>
</dbReference>
<dbReference type="Pfam" id="PF00454">
    <property type="entry name" value="PI3_PI4_kinase"/>
    <property type="match status" value="1"/>
</dbReference>
<dbReference type="SMART" id="SM01343">
    <property type="entry name" value="FATC"/>
    <property type="match status" value="1"/>
</dbReference>
<dbReference type="SMART" id="SM01344">
    <property type="entry name" value="NUC194"/>
    <property type="match status" value="1"/>
</dbReference>
<dbReference type="SMART" id="SM00146">
    <property type="entry name" value="PI3Kc"/>
    <property type="match status" value="1"/>
</dbReference>
<dbReference type="SUPFAM" id="SSF48371">
    <property type="entry name" value="ARM repeat"/>
    <property type="match status" value="3"/>
</dbReference>
<dbReference type="SUPFAM" id="SSF56112">
    <property type="entry name" value="Protein kinase-like (PK-like)"/>
    <property type="match status" value="1"/>
</dbReference>
<dbReference type="PROSITE" id="PS51189">
    <property type="entry name" value="FAT"/>
    <property type="match status" value="1"/>
</dbReference>
<dbReference type="PROSITE" id="PS51190">
    <property type="entry name" value="FATC"/>
    <property type="match status" value="1"/>
</dbReference>
<dbReference type="PROSITE" id="PS00915">
    <property type="entry name" value="PI3_4_KINASE_1"/>
    <property type="match status" value="1"/>
</dbReference>
<dbReference type="PROSITE" id="PS00916">
    <property type="entry name" value="PI3_4_KINASE_2"/>
    <property type="match status" value="1"/>
</dbReference>
<dbReference type="PROSITE" id="PS50290">
    <property type="entry name" value="PI3_4_KINASE_3"/>
    <property type="match status" value="1"/>
</dbReference>
<protein>
    <recommendedName>
        <fullName>DNA-dependent protein kinase catalytic subunit</fullName>
        <shortName>DNA-PK catalytic subunit</shortName>
        <shortName>DNA-PKcs</shortName>
        <ecNumber evidence="1">2.7.11.1</ecNumber>
    </recommendedName>
    <alternativeName>
        <fullName>p460</fullName>
    </alternativeName>
</protein>
<proteinExistence type="evidence at protein level"/>
<evidence type="ECO:0000250" key="1">
    <source>
        <dbReference type="UniProtKB" id="P78527"/>
    </source>
</evidence>
<evidence type="ECO:0000255" key="2">
    <source>
        <dbReference type="PROSITE-ProRule" id="PRU00269"/>
    </source>
</evidence>
<evidence type="ECO:0000255" key="3">
    <source>
        <dbReference type="PROSITE-ProRule" id="PRU00534"/>
    </source>
</evidence>
<evidence type="ECO:0000255" key="4">
    <source>
        <dbReference type="PROSITE-ProRule" id="PRU00535"/>
    </source>
</evidence>
<evidence type="ECO:0000256" key="5">
    <source>
        <dbReference type="SAM" id="MobiDB-lite"/>
    </source>
</evidence>
<evidence type="ECO:0000269" key="6">
    <source>
    </source>
</evidence>
<evidence type="ECO:0000269" key="7">
    <source>
    </source>
</evidence>
<evidence type="ECO:0000269" key="8">
    <source>
    </source>
</evidence>
<evidence type="ECO:0000269" key="9">
    <source>
    </source>
</evidence>
<evidence type="ECO:0000269" key="10">
    <source>
    </source>
</evidence>
<evidence type="ECO:0000269" key="11">
    <source>
    </source>
</evidence>
<evidence type="ECO:0000269" key="12">
    <source>
    </source>
</evidence>
<evidence type="ECO:0000303" key="13">
    <source>
    </source>
</evidence>
<evidence type="ECO:0000305" key="14"/>
<comment type="function">
    <text evidence="1 6 8">Serine/threonine-protein kinase that acts as a molecular sensor for DNA damage (By similarity). Involved in DNA non-homologous end joining (NHEJ) required for double-strand break (DSB) repair and V(D)J recombination (By similarity). Must be bound to DNA to express its catalytic properties (By similarity). Promotes processing of hairpin DNA structures in V(D)J recombination by activation of the hairpin endonuclease artemis (DCLRE1C) (By similarity). Recruited by XRCC5 and XRCC6 to DNA ends and is required to (1) protect and align broken ends of DNA, thereby preventing their degradation, (2) and sequester the DSB for repair by NHEJ (By similarity). Acts as a scaffold protein to aid the localization of DNA repair proteins to the site of damage (By similarity). The assembly of the DNA-PK complex at DNA ends is also required for the NHEJ ligation step (By similarity). Found at the ends of chromosomes, suggesting a further role in the maintenance of telomeric stability and the prevention of chromosomal end fusion (PubMed:12426399). Also involved in modulation of transcription (By similarity). As part of the DNA-PK complex, involved in the early steps of ribosome assembly by promoting the processing of precursor rRNA into mature 18S rRNA in the small-subunit processome (By similarity). Binding to U3 small nucleolar RNA, recruits PRKDC and XRCC5/Ku86 to the small-subunit processome (By similarity). Recognizes the substrate consensus sequence [ST]-Q (By similarity). Phosphorylates 'Ser-139' of histone variant H2AX, thereby regulating DNA damage response mechanism (By similarity). Phosphorylates ASF1A, DCLRE1C, c-Abl/ABL1, histone H1, HSPCA, c-jun/JUN, p53/TP53, PARP1, POU2F1, DHX9, FH, SRF, NHEJ1/XLF, XRCC1, XRCC4, XRCC5, XRCC6, WRN, MYC and RFA2 (By similarity). Can phosphorylate C1D not only in the presence of linear DNA but also in the presence of supercoiled DNA (By similarity). Ability to phosphorylate p53/TP53 in the presence of supercoiled DNA is dependent on C1D (By similarity). Acts as a regulator of the phosphatidylinositol 3-kinase/protein kinase B signal transduction by mediating phosphorylation of 'Ser-473' of protein kinase B (PKB/AKT1, PKB/AKT2, PKB/AKT3), promoting their activation (By similarity). Contributes to the determination of the circadian period length by antagonizing phosphorylation of CRY1 'Ser-588' and increasing CRY1 protein stability, most likely through an indirect mechanism (PubMed:24158435). Plays a role in the regulation of DNA virus-mediated innate immune response by assembling into the HDP-RNP complex, a complex that serves as a platform for IRF3 phosphorylation and subsequent innate immune response activation through the cGAS-STING pathway (By similarity). Also regulates the cGAS-STING pathway by catalyzing phosphorylation of CGAS, thereby impairing CGAS oligomerization and activation (By similarity). Also regulates the cGAS-STING pathway by mediating phosphorylation of PARP1 (By similarity).</text>
</comment>
<comment type="catalytic activity">
    <reaction evidence="1">
        <text>L-seryl-[protein] + ATP = O-phospho-L-seryl-[protein] + ADP + H(+)</text>
        <dbReference type="Rhea" id="RHEA:17989"/>
        <dbReference type="Rhea" id="RHEA-COMP:9863"/>
        <dbReference type="Rhea" id="RHEA-COMP:11604"/>
        <dbReference type="ChEBI" id="CHEBI:15378"/>
        <dbReference type="ChEBI" id="CHEBI:29999"/>
        <dbReference type="ChEBI" id="CHEBI:30616"/>
        <dbReference type="ChEBI" id="CHEBI:83421"/>
        <dbReference type="ChEBI" id="CHEBI:456216"/>
        <dbReference type="EC" id="2.7.11.1"/>
    </reaction>
</comment>
<comment type="catalytic activity">
    <reaction evidence="1">
        <text>L-threonyl-[protein] + ATP = O-phospho-L-threonyl-[protein] + ADP + H(+)</text>
        <dbReference type="Rhea" id="RHEA:46608"/>
        <dbReference type="Rhea" id="RHEA-COMP:11060"/>
        <dbReference type="Rhea" id="RHEA-COMP:11605"/>
        <dbReference type="ChEBI" id="CHEBI:15378"/>
        <dbReference type="ChEBI" id="CHEBI:30013"/>
        <dbReference type="ChEBI" id="CHEBI:30616"/>
        <dbReference type="ChEBI" id="CHEBI:61977"/>
        <dbReference type="ChEBI" id="CHEBI:456216"/>
        <dbReference type="EC" id="2.7.11.1"/>
    </reaction>
</comment>
<comment type="activity regulation">
    <text evidence="1">Activity seems to be attenuated by autophosphorylation. Binding to the SL1 region of U3 small nucleolar RNA promotes auto-phosphorylation activity. Inhibited by wortmannin.</text>
</comment>
<comment type="subunit">
    <text evidence="1">DNA-PK is a heterotrimer of PRKDC and the Ku dimer (composed of XRCC6/Ku70 and XRCC5/Ku86). Formation of this complex may be promoted by interaction with ILF3. Component of the core long-range non-homologous end joining (NHEJ) complex (also named DNA-PK complex) composed of PRKDC, LIG4, XRCC4, XRCC6/Ku70, XRCC5/Ku86 and NHEJ1/XLF. Additional component of the NHEJ complex includes PAXX. Following autophosphorylation, PRKDC dissociates from DNA. Interacts with DNA-PKcs-interacting protein (KIP) with the region upstream the kinase domain. PRKDC alone also interacts with and phosphorylates DCLRE1C, thereby activating the latent endonuclease activity of this protein. Interacts with C1D. Interacts with TTI1 and TELO2. Interacts with CIB1. Interacts with SETX. Interacts with NR4A3; the DNA-dependent protein kinase complex DNA-PK phosphorylates and activates NR4A3 and prevents NR4A3 ubiquitination and degradation. Interacts with BRAT1. Part of the HDP-RNP complex composed of at least HEXIM1, PRKDC, XRCC5, XRCC6, paraspeckle proteins (SFPQ, NONO, PSPC1, RBM14, and MATR3) and NEAT1 RNA. Interacts with KAT5.</text>
</comment>
<comment type="interaction">
    <interactant intactId="EBI-2272005">
        <id>P97313</id>
    </interactant>
    <interactant intactId="EBI-297353">
        <id>P00533</id>
        <label>EGFR</label>
    </interactant>
    <organismsDiffer>true</organismsDiffer>
    <experiments>4</experiments>
</comment>
<comment type="subcellular location">
    <subcellularLocation>
        <location evidence="1">Nucleus</location>
    </subcellularLocation>
    <subcellularLocation>
        <location evidence="1">Nucleus</location>
        <location evidence="1">Nucleolus</location>
    </subcellularLocation>
    <subcellularLocation>
        <location evidence="1">Cytoplasm</location>
        <location evidence="1">Cytosol</location>
    </subcellularLocation>
</comment>
<comment type="alternative products">
    <event type="alternative splicing"/>
    <isoform>
        <id>P97313-1</id>
        <name>1</name>
        <sequence type="displayed"/>
    </isoform>
    <isoform>
        <id>P97313-2</id>
        <name>2</name>
        <sequence type="described" ref="VSP_017361 VSP_017362"/>
    </isoform>
    <text>A number of isoforms are produced.</text>
</comment>
<comment type="PTM">
    <text evidence="1 8 9">Autophosphorylated at two clusters, the T2609 cluster and the S2056 cluster (PubMed:24158435, PubMed:32103174). Autophosphorylated on Ser-2053, Thr-2605, Thr-2634 and Thr-2643. Ser-2053 and Thr-2605 are DNA damage-inducible phosphorylation sites (inducible with ionizing radiation, IR) dephosphorylated by PPP5C (PubMed:24158435, PubMed:32103174). Autophosphorylation induces a conformational change that leads to remodeling of the DNA-PK complex, requisite for efficient end processing and DNA repair (By similarity). Autophosphorylation in trans within DNA-PK complexes loaded on DNA ends leads to the dissociation of PRKDC from DNA and the transition into the short-range NHEJ complex (By similarity). Autophosphorylation of the T2609 cluster is required for hematopoietic development and protein synthesis in erythrocytes precursors (PubMed:32103174).</text>
</comment>
<comment type="PTM">
    <text evidence="7">S-nitrosylated by GAPDH.</text>
</comment>
<comment type="PTM">
    <text evidence="1">Polyubiquitinated by RNF144A, leading to proteasomal degradation.</text>
</comment>
<comment type="disease">
    <text evidence="10">Defects in Prkdc are the cause of severe combined immune deficiency (SCID) which is characterized by a lack of mature functional lymphocytes and a high susceptibility to lethal opportunistic infections if not chronically treated with antibiotics. The lack of B- and T-cell immunity resembles severe combined immunodeficiency syndrome in human infants.</text>
</comment>
<comment type="disruption phenotype">
    <text evidence="9">Viable. Normal number of erythrocytes and platelets. Normal translation levels in erythrocyte precursors.</text>
</comment>
<comment type="similarity">
    <text evidence="14">Belongs to the PI3/PI4-kinase family.</text>
</comment>
<feature type="chain" id="PRO_0000225599" description="DNA-dependent protein kinase catalytic subunit">
    <location>
        <begin position="1"/>
        <end position="4128"/>
    </location>
</feature>
<feature type="repeat" description="HEAT 1">
    <location>
        <begin position="288"/>
        <end position="323"/>
    </location>
</feature>
<feature type="repeat" description="HEAT 2">
    <location>
        <begin position="1001"/>
        <end position="1037"/>
    </location>
</feature>
<feature type="repeat" description="HEAT 3">
    <location>
        <begin position="1050"/>
        <end position="1086"/>
    </location>
</feature>
<feature type="repeat" description="TPR 1">
    <location>
        <begin position="1720"/>
        <end position="1753"/>
    </location>
</feature>
<feature type="domain" description="FAT" evidence="3">
    <location>
        <begin position="2907"/>
        <end position="3539"/>
    </location>
</feature>
<feature type="repeat" description="TPR 2">
    <location>
        <begin position="2921"/>
        <end position="2954"/>
    </location>
</feature>
<feature type="repeat" description="TPR 3">
    <location>
        <begin position="2956"/>
        <end position="2983"/>
    </location>
</feature>
<feature type="domain" description="PI3K/PI4K catalytic" evidence="2">
    <location>
        <begin position="3722"/>
        <end position="4053"/>
    </location>
</feature>
<feature type="domain" description="FATC" evidence="3 4">
    <location>
        <begin position="4096"/>
        <end position="4128"/>
    </location>
</feature>
<feature type="region of interest" description="Interaction with C1D" evidence="1">
    <location>
        <begin position="1501"/>
        <end position="1536"/>
    </location>
</feature>
<feature type="region of interest" description="Leucine-zipper">
    <location>
        <begin position="1501"/>
        <end position="1536"/>
    </location>
</feature>
<feature type="region of interest" description="Disordered" evidence="5">
    <location>
        <begin position="2049"/>
        <end position="2071"/>
    </location>
</feature>
<feature type="region of interest" description="KIP-binding" evidence="1">
    <location>
        <begin position="2432"/>
        <end position="3213"/>
    </location>
</feature>
<feature type="region of interest" description="Disordered" evidence="5">
    <location>
        <begin position="2614"/>
        <end position="2635"/>
    </location>
</feature>
<feature type="region of interest" description="May split the end of the DNA molecule, with the two strands separating around the region" evidence="1">
    <location>
        <begin position="2738"/>
        <end position="2766"/>
    </location>
</feature>
<feature type="region of interest" description="G-loop" evidence="2">
    <location>
        <begin position="3728"/>
        <end position="3734"/>
    </location>
</feature>
<feature type="region of interest" description="Catalytic loop" evidence="2">
    <location>
        <begin position="3919"/>
        <end position="3927"/>
    </location>
</feature>
<feature type="region of interest" description="Activation loop" evidence="2">
    <location>
        <begin position="3939"/>
        <end position="3964"/>
    </location>
</feature>
<feature type="compositionally biased region" description="Basic and acidic residues" evidence="5">
    <location>
        <begin position="2054"/>
        <end position="2070"/>
    </location>
</feature>
<feature type="site" description="Cleavage; by caspase-3" evidence="1">
    <location>
        <begin position="2017"/>
        <end position="2018"/>
    </location>
</feature>
<feature type="modified residue" description="N6-acetyllysine" evidence="1">
    <location>
        <position position="117"/>
    </location>
</feature>
<feature type="modified residue" description="Phosphoserine" evidence="1">
    <location>
        <position position="511"/>
    </location>
</feature>
<feature type="modified residue" description="Phosphoserine" evidence="1">
    <location>
        <position position="686"/>
    </location>
</feature>
<feature type="modified residue" description="Phosphoserine" evidence="1">
    <location>
        <position position="840"/>
    </location>
</feature>
<feature type="modified residue" description="Phosphoserine" evidence="1">
    <location>
        <position position="891"/>
    </location>
</feature>
<feature type="modified residue" description="Phosphoserine" evidence="1">
    <location>
        <position position="1062"/>
    </location>
</feature>
<feature type="modified residue" description="N6-acetyllysine" evidence="1">
    <location>
        <position position="1206"/>
    </location>
</feature>
<feature type="modified residue" description="N6-acetyllysine" evidence="1">
    <location>
        <position position="1967"/>
    </location>
</feature>
<feature type="modified residue" description="Phosphoserine; by autocatalysis" evidence="1">
    <location>
        <position position="2053"/>
    </location>
</feature>
<feature type="modified residue" description="N6-acetyllysine" evidence="1">
    <location>
        <position position="2255"/>
    </location>
</feature>
<feature type="modified residue" description="Phosphothreonine" evidence="1">
    <location>
        <position position="2531"/>
    </location>
</feature>
<feature type="modified residue" description="Phosphothreonine; by autocatalysis" evidence="1">
    <location>
        <position position="2605"/>
    </location>
</feature>
<feature type="modified residue" description="Phosphoserine; by autocatalysis" evidence="1">
    <location>
        <position position="2608"/>
    </location>
</feature>
<feature type="modified residue" description="Phosphothreonine; by autocatalysis" evidence="1">
    <location>
        <position position="2634"/>
    </location>
</feature>
<feature type="modified residue" description="Phosphothreonine; by autocatalysis" evidence="1">
    <location>
        <position position="2643"/>
    </location>
</feature>
<feature type="modified residue" description="Phosphoserine" evidence="1">
    <location>
        <position position="3206"/>
    </location>
</feature>
<feature type="modified residue" description="N6-acetyllysine" evidence="1">
    <location>
        <position position="3241"/>
    </location>
</feature>
<feature type="modified residue" description="N6-acetyllysine" evidence="1">
    <location>
        <position position="3260"/>
    </location>
</feature>
<feature type="modified residue" description="N6-acetyllysine" evidence="1">
    <location>
        <position position="3638"/>
    </location>
</feature>
<feature type="modified residue" description="N6-acetyllysine" evidence="1">
    <location>
        <position position="3642"/>
    </location>
</feature>
<feature type="modified residue" description="Phosphoserine" evidence="1">
    <location>
        <position position="3731"/>
    </location>
</feature>
<feature type="modified residue" description="Phosphoserine" evidence="1">
    <location>
        <position position="3821"/>
    </location>
</feature>
<feature type="modified residue" description="Phosphoserine" evidence="1">
    <location>
        <position position="4026"/>
    </location>
</feature>
<feature type="splice variant" id="VSP_017361" description="In isoform 2." evidence="13">
    <original>DEALSLEEIRI</original>
    <variation>VRNPFLILYLK</variation>
    <location>
        <begin position="842"/>
        <end position="852"/>
    </location>
</feature>
<feature type="splice variant" id="VSP_017362" description="In isoform 2." evidence="13">
    <location>
        <begin position="853"/>
        <end position="4128"/>
    </location>
</feature>
<feature type="sequence variant" evidence="10 11 12">
    <original>R</original>
    <variation>C</variation>
    <location>
        <position position="2140"/>
    </location>
</feature>
<feature type="sequence variant">
    <original>L</original>
    <variation>P</variation>
    <location>
        <position position="3191"/>
    </location>
</feature>
<feature type="sequence variant" description="In SCID." evidence="10">
    <location>
        <begin position="4046"/>
        <end position="4128"/>
    </location>
</feature>
<feature type="mutagenesis site" description="Normal erythrocyte and platelet numbers; when associated with A-2038 and 2050-A--A-2053." evidence="9">
    <original>S</original>
    <variation>A</variation>
    <location>
        <position position="2026"/>
    </location>
</feature>
<feature type="mutagenesis site" description="Normal erythrocyte and platelet numbers; when associated with A-2026 and 2050-A--A-2053." evidence="9">
    <original>S</original>
    <variation>A</variation>
    <location>
        <position position="2038"/>
    </location>
</feature>
<feature type="mutagenesis site" description="Normal erythrocyte and platelet numbers; when associated with A-2026 and A-2038." evidence="9">
    <original>SYSS</original>
    <variation>AYAA</variation>
    <location>
        <begin position="2050"/>
        <end position="2053"/>
    </location>
</feature>
<feature type="mutagenesis site" description="Lethal at 4-week-old; impaired hematopoiesis due to a decrease in hematopoietic stem and progenitor cells which causes a severe reduction in the numbers of erythrocytes, platelets, lymphocytes and neutrophils; reduced protein synthesis in bone marrow and fetal erythrocyte precursors; normal V(D)J recombination in B-cells; when associated with 2614-A--A-2616, A-2634 and A-2643." evidence="9">
    <original>T</original>
    <variation>A</variation>
    <location>
        <position position="2605"/>
    </location>
</feature>
<feature type="mutagenesis site" description="Lethal at 4-week-old; impaired hematopoiesis due to a decrease in hematopoietic stem and progenitor cells which causes a severe reduction in the numbers of erythrocytes, platelets, lymphocytes and neutrophils; reduced protein synthesis in bone marrow and fetal erythrocyte precursors; normal V(D)J recombination in B-cells; when associated with A-2605, A-2634 and A-2643." evidence="9">
    <original>TQT</original>
    <variation>AQA</variation>
    <location>
        <begin position="2614"/>
        <end position="2616"/>
    </location>
</feature>
<feature type="mutagenesis site" description="Lethal at 4-week-old; impaired hematopoiesis due to a decrease in hematopoietic stem and progenitor cells which causes a severe reduction in the numbers of erythrocytes, platelets, lymphocytes and neutrophils; reduced protein synthesis in bone marrow and fetal erythrocyte precursors; normal V(D)J recombination in B-cells; when associated with A-2605, 2614-A--A-2616 and A-2643." evidence="9">
    <original>T</original>
    <variation>A</variation>
    <location>
        <position position="2634"/>
    </location>
</feature>
<feature type="mutagenesis site" description="Lethal at 4-week-old; impaired hematopoiesis due to a decrease in hematopoietic stem and progenitor cells which causes a severe reduction in the numbers of erythrocytes, platelets, lymphocytes and neutrophils; reduced protein synthesis in bone marrow and fetal erythrocyte precursors; normal V(D)J recombination in B-cells; when associated with A-2605, 2614-A--A-2616 and A-2634." evidence="9">
    <original>T</original>
    <variation>A</variation>
    <location>
        <position position="2643"/>
    </location>
</feature>
<feature type="mutagenesis site" description="Probable loss of catalytic activity. Severe reduction in the number of hematopoietic stem and progenitor cells in fetal liver. Slight reduction in translation during erythrocyte development in fetal liver." evidence="9">
    <original>D</original>
    <variation>A</variation>
    <location>
        <position position="3922"/>
    </location>
</feature>
<feature type="sequence conflict" description="In Ref. 1; BAA19566, 2; BAA28873/BAA28875 and 3; BAB91149." evidence="14" ref="1 2 3">
    <original>M</original>
    <variation>T</variation>
    <location>
        <position position="3300"/>
    </location>
</feature>
<feature type="sequence conflict" description="In Ref. 10; AAB36939/AAB36940." evidence="14" ref="10">
    <original>M</original>
    <variation>V</variation>
    <location>
        <position position="3844"/>
    </location>
</feature>